<feature type="chain" id="PRO_0000060478" description="tRNA (guanine-N(1)-)-methyltransferase">
    <location>
        <begin position="1"/>
        <end position="277"/>
    </location>
</feature>
<feature type="binding site" evidence="1">
    <location>
        <begin position="140"/>
        <end position="145"/>
    </location>
    <ligand>
        <name>S-adenosyl-L-methionine</name>
        <dbReference type="ChEBI" id="CHEBI:59789"/>
    </ligand>
</feature>
<keyword id="KW-0963">Cytoplasm</keyword>
<keyword id="KW-0489">Methyltransferase</keyword>
<keyword id="KW-0949">S-adenosyl-L-methionine</keyword>
<keyword id="KW-0808">Transferase</keyword>
<keyword id="KW-0819">tRNA processing</keyword>
<proteinExistence type="inferred from homology"/>
<reference key="1">
    <citation type="submission" date="1997-02" db="EMBL/GenBank/DDBJ databases">
        <authorList>
            <person name="Parro V."/>
            <person name="Mellado R.P."/>
        </authorList>
    </citation>
    <scope>NUCLEOTIDE SEQUENCE [GENOMIC DNA]</scope>
    <source>
        <strain>TK21</strain>
    </source>
</reference>
<protein>
    <recommendedName>
        <fullName>tRNA (guanine-N(1)-)-methyltransferase</fullName>
        <ecNumber>2.1.1.228</ecNumber>
    </recommendedName>
    <alternativeName>
        <fullName>M1G-methyltransferase</fullName>
    </alternativeName>
    <alternativeName>
        <fullName>tRNA [GM37] methyltransferase</fullName>
    </alternativeName>
</protein>
<comment type="function">
    <text evidence="1">Specifically methylates guanosine-37 in various tRNAs.</text>
</comment>
<comment type="catalytic activity">
    <reaction>
        <text>guanosine(37) in tRNA + S-adenosyl-L-methionine = N(1)-methylguanosine(37) in tRNA + S-adenosyl-L-homocysteine + H(+)</text>
        <dbReference type="Rhea" id="RHEA:36899"/>
        <dbReference type="Rhea" id="RHEA-COMP:10145"/>
        <dbReference type="Rhea" id="RHEA-COMP:10147"/>
        <dbReference type="ChEBI" id="CHEBI:15378"/>
        <dbReference type="ChEBI" id="CHEBI:57856"/>
        <dbReference type="ChEBI" id="CHEBI:59789"/>
        <dbReference type="ChEBI" id="CHEBI:73542"/>
        <dbReference type="ChEBI" id="CHEBI:74269"/>
        <dbReference type="EC" id="2.1.1.228"/>
    </reaction>
</comment>
<comment type="subunit">
    <text evidence="1">Homodimer.</text>
</comment>
<comment type="subcellular location">
    <subcellularLocation>
        <location evidence="2">Cytoplasm</location>
    </subcellularLocation>
</comment>
<comment type="similarity">
    <text evidence="2">Belongs to the RNA methyltransferase TrmD family.</text>
</comment>
<evidence type="ECO:0000250" key="1"/>
<evidence type="ECO:0000305" key="2"/>
<name>TRMD_STRLI</name>
<accession>P0A4P2</accession>
<accession>O69882</accession>
<dbReference type="EC" id="2.1.1.228"/>
<dbReference type="EMBL" id="Z86111">
    <property type="protein sequence ID" value="CAB06803.1"/>
    <property type="molecule type" value="Genomic_DNA"/>
</dbReference>
<dbReference type="SMR" id="P0A4P2"/>
<dbReference type="GO" id="GO:0005829">
    <property type="term" value="C:cytosol"/>
    <property type="evidence" value="ECO:0007669"/>
    <property type="project" value="TreeGrafter"/>
</dbReference>
<dbReference type="GO" id="GO:0052906">
    <property type="term" value="F:tRNA (guanine(37)-N1)-methyltransferase activity"/>
    <property type="evidence" value="ECO:0007669"/>
    <property type="project" value="UniProtKB-UniRule"/>
</dbReference>
<dbReference type="GO" id="GO:0002939">
    <property type="term" value="P:tRNA N1-guanine methylation"/>
    <property type="evidence" value="ECO:0007669"/>
    <property type="project" value="TreeGrafter"/>
</dbReference>
<dbReference type="CDD" id="cd18080">
    <property type="entry name" value="TrmD-like"/>
    <property type="match status" value="1"/>
</dbReference>
<dbReference type="FunFam" id="1.10.1270.20:FF:000002">
    <property type="entry name" value="tRNA (guanine-N(1)-)-methyltransferase"/>
    <property type="match status" value="1"/>
</dbReference>
<dbReference type="FunFam" id="3.40.1280.10:FF:000001">
    <property type="entry name" value="tRNA (guanine-N(1)-)-methyltransferase"/>
    <property type="match status" value="1"/>
</dbReference>
<dbReference type="Gene3D" id="3.40.1280.10">
    <property type="match status" value="1"/>
</dbReference>
<dbReference type="Gene3D" id="1.10.1270.20">
    <property type="entry name" value="tRNA(m1g37)methyltransferase, domain 2"/>
    <property type="match status" value="1"/>
</dbReference>
<dbReference type="HAMAP" id="MF_00605">
    <property type="entry name" value="TrmD"/>
    <property type="match status" value="1"/>
</dbReference>
<dbReference type="InterPro" id="IPR029028">
    <property type="entry name" value="Alpha/beta_knot_MTases"/>
</dbReference>
<dbReference type="InterPro" id="IPR023148">
    <property type="entry name" value="tRNA_m1G_MeTrfase_C_sf"/>
</dbReference>
<dbReference type="InterPro" id="IPR002649">
    <property type="entry name" value="tRNA_m1G_MeTrfase_TrmD"/>
</dbReference>
<dbReference type="InterPro" id="IPR029026">
    <property type="entry name" value="tRNA_m1G_MTases_N"/>
</dbReference>
<dbReference type="InterPro" id="IPR016009">
    <property type="entry name" value="tRNA_MeTrfase_TRMD/TRM10"/>
</dbReference>
<dbReference type="NCBIfam" id="NF000648">
    <property type="entry name" value="PRK00026.1"/>
    <property type="match status" value="1"/>
</dbReference>
<dbReference type="NCBIfam" id="TIGR00088">
    <property type="entry name" value="trmD"/>
    <property type="match status" value="1"/>
</dbReference>
<dbReference type="PANTHER" id="PTHR46417">
    <property type="entry name" value="TRNA (GUANINE-N(1)-)-METHYLTRANSFERASE"/>
    <property type="match status" value="1"/>
</dbReference>
<dbReference type="PANTHER" id="PTHR46417:SF1">
    <property type="entry name" value="TRNA (GUANINE-N(1)-)-METHYLTRANSFERASE"/>
    <property type="match status" value="1"/>
</dbReference>
<dbReference type="Pfam" id="PF01746">
    <property type="entry name" value="tRNA_m1G_MT"/>
    <property type="match status" value="1"/>
</dbReference>
<dbReference type="PIRSF" id="PIRSF000386">
    <property type="entry name" value="tRNA_mtase"/>
    <property type="match status" value="1"/>
</dbReference>
<dbReference type="SUPFAM" id="SSF75217">
    <property type="entry name" value="alpha/beta knot"/>
    <property type="match status" value="1"/>
</dbReference>
<sequence>MRLDVVTIFPEYLEPLNVSLVGKARARGQLGVHVHDLRDWTYDRHNTVDDTPYGGGPGMVMKTEPWGDALDSVLADGYETGCGEPALVVPTPSGRPFTQELAVHLSERPWLIFTPARYEGIDRRVVDEYATRMPVYEVSIGDYVLAGGEAAVLVVTEAVARLLPGVLGNAESHRDDSFAPGAMANLLEGPVHTKPPQWRGRGIPDVLLSGHHGKIARWRRDEALRRTTANRPDLIERCDPAAFDKKDREMLSILGWQPDPDGEPYGRFWRRTPGMEE</sequence>
<organism>
    <name type="scientific">Streptomyces lividans</name>
    <dbReference type="NCBI Taxonomy" id="1916"/>
    <lineage>
        <taxon>Bacteria</taxon>
        <taxon>Bacillati</taxon>
        <taxon>Actinomycetota</taxon>
        <taxon>Actinomycetes</taxon>
        <taxon>Kitasatosporales</taxon>
        <taxon>Streptomycetaceae</taxon>
        <taxon>Streptomyces</taxon>
    </lineage>
</organism>
<gene>
    <name type="primary">trmD</name>
</gene>